<keyword id="KW-0963">Cytoplasm</keyword>
<keyword id="KW-0274">FAD</keyword>
<keyword id="KW-0285">Flavoprotein</keyword>
<keyword id="KW-0520">NAD</keyword>
<keyword id="KW-1185">Reference proteome</keyword>
<keyword id="KW-0819">tRNA processing</keyword>
<name>MNMG_LACPL</name>
<sequence length="636" mass="70736">MTEVKQYPGRDYDVIVVGAGHAGSEAALAAARMGNRTLLMTINLDMVAFMPCNPSVGGPAKGIVVREIDALGGEMGRNIDKTYVQMRMLNTGKGPAVRALRAQADKHAYHAEMKHTIEREPNLTLRQGIVDGLIVEDGVCKGVITNTGARYSAKSVVLTTGTAARGKIIIGELMYSSGPNNSQPAMKLSGDLERLGFNLERFKTGTPPRVDGNTIDYSVTEEQPGDPEPHHFSFETKDADYIDLKHQLSCWLTYTNETTHKIIRENLDRAPMFTGVIEGVGPRYCPSIEDKIVRFADKKRHQLFLEPEGRNTDEWYVQGLSTSMPEEVQQRILHSIKGLEDAEMMRPGYAIEYDVVAPYQLKATLETKLVKNLYTAGQTNGTSGYEEAAGQGLIAGINAGLRALDRGQFTLKRSDAYIGVMIDDLVTKGTNEPYRLLTSRAEYRLILRHDNADLRLTDKGRELGLIDDERYAAFEAKRQAIKNELDRLGKIRIKPNDEVNAFLRAHNSGELKDGVLAADFLKRPEVQYADLMKFIPAAPEPLERHVIEQVEIQIKYAGYIQKAEERVDRLKKMEAKKIPDRIDYDAIDGLATEAHQKLKKIQPTTIAQASRISGVNPADIAILSVYIQQGRIAKVQ</sequence>
<dbReference type="EMBL" id="AL935263">
    <property type="protein sequence ID" value="CCC80630.1"/>
    <property type="molecule type" value="Genomic_DNA"/>
</dbReference>
<dbReference type="RefSeq" id="WP_011102289.1">
    <property type="nucleotide sequence ID" value="NC_004567.2"/>
</dbReference>
<dbReference type="RefSeq" id="YP_004891144.1">
    <property type="nucleotide sequence ID" value="NC_004567.2"/>
</dbReference>
<dbReference type="SMR" id="Q88RX6"/>
<dbReference type="STRING" id="220668.lp_3681"/>
<dbReference type="EnsemblBacteria" id="CCC80630">
    <property type="protein sequence ID" value="CCC80630"/>
    <property type="gene ID" value="lp_3681"/>
</dbReference>
<dbReference type="KEGG" id="lpl:lp_3681"/>
<dbReference type="PATRIC" id="fig|220668.9.peg.3074"/>
<dbReference type="eggNOG" id="COG0445">
    <property type="taxonomic scope" value="Bacteria"/>
</dbReference>
<dbReference type="HOGENOM" id="CLU_007831_2_2_9"/>
<dbReference type="OrthoDB" id="9815560at2"/>
<dbReference type="PhylomeDB" id="Q88RX6"/>
<dbReference type="Proteomes" id="UP000000432">
    <property type="component" value="Chromosome"/>
</dbReference>
<dbReference type="GO" id="GO:0005829">
    <property type="term" value="C:cytosol"/>
    <property type="evidence" value="ECO:0007669"/>
    <property type="project" value="TreeGrafter"/>
</dbReference>
<dbReference type="GO" id="GO:0050660">
    <property type="term" value="F:flavin adenine dinucleotide binding"/>
    <property type="evidence" value="ECO:0007669"/>
    <property type="project" value="UniProtKB-UniRule"/>
</dbReference>
<dbReference type="GO" id="GO:0030488">
    <property type="term" value="P:tRNA methylation"/>
    <property type="evidence" value="ECO:0007669"/>
    <property type="project" value="TreeGrafter"/>
</dbReference>
<dbReference type="GO" id="GO:0002098">
    <property type="term" value="P:tRNA wobble uridine modification"/>
    <property type="evidence" value="ECO:0007669"/>
    <property type="project" value="InterPro"/>
</dbReference>
<dbReference type="FunFam" id="1.10.10.1800:FF:000001">
    <property type="entry name" value="tRNA uridine 5-carboxymethylaminomethyl modification enzyme MnmG"/>
    <property type="match status" value="1"/>
</dbReference>
<dbReference type="FunFam" id="1.10.150.570:FF:000001">
    <property type="entry name" value="tRNA uridine 5-carboxymethylaminomethyl modification enzyme MnmG"/>
    <property type="match status" value="1"/>
</dbReference>
<dbReference type="FunFam" id="3.50.50.60:FF:000002">
    <property type="entry name" value="tRNA uridine 5-carboxymethylaminomethyl modification enzyme MnmG"/>
    <property type="match status" value="1"/>
</dbReference>
<dbReference type="FunFam" id="3.50.50.60:FF:000063">
    <property type="entry name" value="tRNA uridine 5-carboxymethylaminomethyl modification enzyme MnmG"/>
    <property type="match status" value="1"/>
</dbReference>
<dbReference type="Gene3D" id="3.50.50.60">
    <property type="entry name" value="FAD/NAD(P)-binding domain"/>
    <property type="match status" value="2"/>
</dbReference>
<dbReference type="Gene3D" id="1.10.150.570">
    <property type="entry name" value="GidA associated domain, C-terminal subdomain"/>
    <property type="match status" value="1"/>
</dbReference>
<dbReference type="Gene3D" id="1.10.10.1800">
    <property type="entry name" value="tRNA uridine 5-carboxymethylaminomethyl modification enzyme MnmG/GidA"/>
    <property type="match status" value="1"/>
</dbReference>
<dbReference type="HAMAP" id="MF_00129">
    <property type="entry name" value="MnmG_GidA"/>
    <property type="match status" value="1"/>
</dbReference>
<dbReference type="InterPro" id="IPR036188">
    <property type="entry name" value="FAD/NAD-bd_sf"/>
</dbReference>
<dbReference type="InterPro" id="IPR049312">
    <property type="entry name" value="GIDA_C_N"/>
</dbReference>
<dbReference type="InterPro" id="IPR004416">
    <property type="entry name" value="MnmG"/>
</dbReference>
<dbReference type="InterPro" id="IPR002218">
    <property type="entry name" value="MnmG-rel"/>
</dbReference>
<dbReference type="InterPro" id="IPR020595">
    <property type="entry name" value="MnmG-rel_CS"/>
</dbReference>
<dbReference type="InterPro" id="IPR026904">
    <property type="entry name" value="MnmG_C"/>
</dbReference>
<dbReference type="InterPro" id="IPR047001">
    <property type="entry name" value="MnmG_C_subdom"/>
</dbReference>
<dbReference type="InterPro" id="IPR044920">
    <property type="entry name" value="MnmG_C_subdom_sf"/>
</dbReference>
<dbReference type="InterPro" id="IPR040131">
    <property type="entry name" value="MnmG_N"/>
</dbReference>
<dbReference type="NCBIfam" id="TIGR00136">
    <property type="entry name" value="mnmG_gidA"/>
    <property type="match status" value="1"/>
</dbReference>
<dbReference type="PANTHER" id="PTHR11806">
    <property type="entry name" value="GLUCOSE INHIBITED DIVISION PROTEIN A"/>
    <property type="match status" value="1"/>
</dbReference>
<dbReference type="PANTHER" id="PTHR11806:SF0">
    <property type="entry name" value="PROTEIN MTO1 HOMOLOG, MITOCHONDRIAL"/>
    <property type="match status" value="1"/>
</dbReference>
<dbReference type="Pfam" id="PF01134">
    <property type="entry name" value="GIDA"/>
    <property type="match status" value="1"/>
</dbReference>
<dbReference type="Pfam" id="PF21680">
    <property type="entry name" value="GIDA_C_1st"/>
    <property type="match status" value="1"/>
</dbReference>
<dbReference type="Pfam" id="PF13932">
    <property type="entry name" value="SAM_GIDA_C"/>
    <property type="match status" value="1"/>
</dbReference>
<dbReference type="PRINTS" id="PR00368">
    <property type="entry name" value="FADPNR"/>
</dbReference>
<dbReference type="PRINTS" id="PR00411">
    <property type="entry name" value="PNDRDTASEI"/>
</dbReference>
<dbReference type="SMART" id="SM01228">
    <property type="entry name" value="GIDA_assoc_3"/>
    <property type="match status" value="1"/>
</dbReference>
<dbReference type="SUPFAM" id="SSF51905">
    <property type="entry name" value="FAD/NAD(P)-binding domain"/>
    <property type="match status" value="1"/>
</dbReference>
<dbReference type="PROSITE" id="PS01280">
    <property type="entry name" value="GIDA_1"/>
    <property type="match status" value="1"/>
</dbReference>
<dbReference type="PROSITE" id="PS01281">
    <property type="entry name" value="GIDA_2"/>
    <property type="match status" value="1"/>
</dbReference>
<evidence type="ECO:0000255" key="1">
    <source>
        <dbReference type="HAMAP-Rule" id="MF_00129"/>
    </source>
</evidence>
<gene>
    <name evidence="1" type="primary">mnmG</name>
    <name evidence="1" type="synonym">gidA</name>
    <name type="ordered locus">lp_3681</name>
</gene>
<comment type="function">
    <text evidence="1">NAD-binding protein involved in the addition of a carboxymethylaminomethyl (cmnm) group at the wobble position (U34) of certain tRNAs, forming tRNA-cmnm(5)s(2)U34.</text>
</comment>
<comment type="cofactor">
    <cofactor evidence="1">
        <name>FAD</name>
        <dbReference type="ChEBI" id="CHEBI:57692"/>
    </cofactor>
</comment>
<comment type="subunit">
    <text evidence="1">Homodimer. Heterotetramer of two MnmE and two MnmG subunits.</text>
</comment>
<comment type="subcellular location">
    <subcellularLocation>
        <location evidence="1">Cytoplasm</location>
    </subcellularLocation>
</comment>
<comment type="similarity">
    <text evidence="1">Belongs to the MnmG family.</text>
</comment>
<accession>Q88RX6</accession>
<accession>F9ULM3</accession>
<feature type="chain" id="PRO_0000117117" description="tRNA uridine 5-carboxymethylaminomethyl modification enzyme MnmG">
    <location>
        <begin position="1"/>
        <end position="636"/>
    </location>
</feature>
<feature type="binding site" evidence="1">
    <location>
        <begin position="18"/>
        <end position="23"/>
    </location>
    <ligand>
        <name>FAD</name>
        <dbReference type="ChEBI" id="CHEBI:57692"/>
    </ligand>
</feature>
<feature type="binding site" evidence="1">
    <location>
        <begin position="281"/>
        <end position="295"/>
    </location>
    <ligand>
        <name>NAD(+)</name>
        <dbReference type="ChEBI" id="CHEBI:57540"/>
    </ligand>
</feature>
<protein>
    <recommendedName>
        <fullName evidence="1">tRNA uridine 5-carboxymethylaminomethyl modification enzyme MnmG</fullName>
    </recommendedName>
    <alternativeName>
        <fullName evidence="1">Glucose-inhibited division protein A</fullName>
    </alternativeName>
</protein>
<proteinExistence type="inferred from homology"/>
<reference key="1">
    <citation type="journal article" date="2003" name="Proc. Natl. Acad. Sci. U.S.A.">
        <title>Complete genome sequence of Lactobacillus plantarum WCFS1.</title>
        <authorList>
            <person name="Kleerebezem M."/>
            <person name="Boekhorst J."/>
            <person name="van Kranenburg R."/>
            <person name="Molenaar D."/>
            <person name="Kuipers O.P."/>
            <person name="Leer R."/>
            <person name="Tarchini R."/>
            <person name="Peters S.A."/>
            <person name="Sandbrink H.M."/>
            <person name="Fiers M.W.E.J."/>
            <person name="Stiekema W."/>
            <person name="Klein Lankhorst R.M."/>
            <person name="Bron P.A."/>
            <person name="Hoffer S.M."/>
            <person name="Nierop Groot M.N."/>
            <person name="Kerkhoven R."/>
            <person name="De Vries M."/>
            <person name="Ursing B."/>
            <person name="De Vos W.M."/>
            <person name="Siezen R.J."/>
        </authorList>
    </citation>
    <scope>NUCLEOTIDE SEQUENCE [LARGE SCALE GENOMIC DNA]</scope>
    <source>
        <strain>ATCC BAA-793 / NCIMB 8826 / WCFS1</strain>
    </source>
</reference>
<reference key="2">
    <citation type="journal article" date="2012" name="J. Bacteriol.">
        <title>Complete resequencing and reannotation of the Lactobacillus plantarum WCFS1 genome.</title>
        <authorList>
            <person name="Siezen R.J."/>
            <person name="Francke C."/>
            <person name="Renckens B."/>
            <person name="Boekhorst J."/>
            <person name="Wels M."/>
            <person name="Kleerebezem M."/>
            <person name="van Hijum S.A."/>
        </authorList>
    </citation>
    <scope>NUCLEOTIDE SEQUENCE [LARGE SCALE GENOMIC DNA]</scope>
    <scope>GENOME REANNOTATION</scope>
    <source>
        <strain>ATCC BAA-793 / NCIMB 8826 / WCFS1</strain>
    </source>
</reference>
<organism>
    <name type="scientific">Lactiplantibacillus plantarum (strain ATCC BAA-793 / NCIMB 8826 / WCFS1)</name>
    <name type="common">Lactobacillus plantarum</name>
    <dbReference type="NCBI Taxonomy" id="220668"/>
    <lineage>
        <taxon>Bacteria</taxon>
        <taxon>Bacillati</taxon>
        <taxon>Bacillota</taxon>
        <taxon>Bacilli</taxon>
        <taxon>Lactobacillales</taxon>
        <taxon>Lactobacillaceae</taxon>
        <taxon>Lactiplantibacillus</taxon>
    </lineage>
</organism>